<keyword id="KW-0238">DNA-binding</keyword>
<keyword id="KW-0391">Immunity</keyword>
<keyword id="KW-0399">Innate immunity</keyword>
<keyword id="KW-0539">Nucleus</keyword>
<keyword id="KW-0611">Plant defense</keyword>
<keyword id="KW-1185">Reference proteome</keyword>
<keyword id="KW-0804">Transcription</keyword>
<keyword id="KW-0805">Transcription regulation</keyword>
<reference key="1">
    <citation type="journal article" date="2000" name="Nature">
        <title>Sequence and analysis of chromosome 3 of the plant Arabidopsis thaliana.</title>
        <authorList>
            <person name="Salanoubat M."/>
            <person name="Lemcke K."/>
            <person name="Rieger M."/>
            <person name="Ansorge W."/>
            <person name="Unseld M."/>
            <person name="Fartmann B."/>
            <person name="Valle G."/>
            <person name="Bloecker H."/>
            <person name="Perez-Alonso M."/>
            <person name="Obermaier B."/>
            <person name="Delseny M."/>
            <person name="Boutry M."/>
            <person name="Grivell L.A."/>
            <person name="Mache R."/>
            <person name="Puigdomenech P."/>
            <person name="De Simone V."/>
            <person name="Choisne N."/>
            <person name="Artiguenave F."/>
            <person name="Robert C."/>
            <person name="Brottier P."/>
            <person name="Wincker P."/>
            <person name="Cattolico L."/>
            <person name="Weissenbach J."/>
            <person name="Saurin W."/>
            <person name="Quetier F."/>
            <person name="Schaefer M."/>
            <person name="Mueller-Auer S."/>
            <person name="Gabel C."/>
            <person name="Fuchs M."/>
            <person name="Benes V."/>
            <person name="Wurmbach E."/>
            <person name="Drzonek H."/>
            <person name="Erfle H."/>
            <person name="Jordan N."/>
            <person name="Bangert S."/>
            <person name="Wiedelmann R."/>
            <person name="Kranz H."/>
            <person name="Voss H."/>
            <person name="Holland R."/>
            <person name="Brandt P."/>
            <person name="Nyakatura G."/>
            <person name="Vezzi A."/>
            <person name="D'Angelo M."/>
            <person name="Pallavicini A."/>
            <person name="Toppo S."/>
            <person name="Simionati B."/>
            <person name="Conrad A."/>
            <person name="Hornischer K."/>
            <person name="Kauer G."/>
            <person name="Loehnert T.-H."/>
            <person name="Nordsiek G."/>
            <person name="Reichelt J."/>
            <person name="Scharfe M."/>
            <person name="Schoen O."/>
            <person name="Bargues M."/>
            <person name="Terol J."/>
            <person name="Climent J."/>
            <person name="Navarro P."/>
            <person name="Collado C."/>
            <person name="Perez-Perez A."/>
            <person name="Ottenwaelder B."/>
            <person name="Duchemin D."/>
            <person name="Cooke R."/>
            <person name="Laudie M."/>
            <person name="Berger-Llauro C."/>
            <person name="Purnelle B."/>
            <person name="Masuy D."/>
            <person name="de Haan M."/>
            <person name="Maarse A.C."/>
            <person name="Alcaraz J.-P."/>
            <person name="Cottet A."/>
            <person name="Casacuberta E."/>
            <person name="Monfort A."/>
            <person name="Argiriou A."/>
            <person name="Flores M."/>
            <person name="Liguori R."/>
            <person name="Vitale D."/>
            <person name="Mannhaupt G."/>
            <person name="Haase D."/>
            <person name="Schoof H."/>
            <person name="Rudd S."/>
            <person name="Zaccaria P."/>
            <person name="Mewes H.-W."/>
            <person name="Mayer K.F.X."/>
            <person name="Kaul S."/>
            <person name="Town C.D."/>
            <person name="Koo H.L."/>
            <person name="Tallon L.J."/>
            <person name="Jenkins J."/>
            <person name="Rooney T."/>
            <person name="Rizzo M."/>
            <person name="Walts A."/>
            <person name="Utterback T."/>
            <person name="Fujii C.Y."/>
            <person name="Shea T.P."/>
            <person name="Creasy T.H."/>
            <person name="Haas B."/>
            <person name="Maiti R."/>
            <person name="Wu D."/>
            <person name="Peterson J."/>
            <person name="Van Aken S."/>
            <person name="Pai G."/>
            <person name="Militscher J."/>
            <person name="Sellers P."/>
            <person name="Gill J.E."/>
            <person name="Feldblyum T.V."/>
            <person name="Preuss D."/>
            <person name="Lin X."/>
            <person name="Nierman W.C."/>
            <person name="Salzberg S.L."/>
            <person name="White O."/>
            <person name="Venter J.C."/>
            <person name="Fraser C.M."/>
            <person name="Kaneko T."/>
            <person name="Nakamura Y."/>
            <person name="Sato S."/>
            <person name="Kato T."/>
            <person name="Asamizu E."/>
            <person name="Sasamoto S."/>
            <person name="Kimura T."/>
            <person name="Idesawa K."/>
            <person name="Kawashima K."/>
            <person name="Kishida Y."/>
            <person name="Kiyokawa C."/>
            <person name="Kohara M."/>
            <person name="Matsumoto M."/>
            <person name="Matsuno A."/>
            <person name="Muraki A."/>
            <person name="Nakayama S."/>
            <person name="Nakazaki N."/>
            <person name="Shinpo S."/>
            <person name="Takeuchi C."/>
            <person name="Wada T."/>
            <person name="Watanabe A."/>
            <person name="Yamada M."/>
            <person name="Yasuda M."/>
            <person name="Tabata S."/>
        </authorList>
    </citation>
    <scope>NUCLEOTIDE SEQUENCE [LARGE SCALE GENOMIC DNA]</scope>
    <source>
        <strain>cv. Columbia</strain>
    </source>
</reference>
<reference key="2">
    <citation type="journal article" date="2017" name="Plant J.">
        <title>Araport11: a complete reannotation of the Arabidopsis thaliana reference genome.</title>
        <authorList>
            <person name="Cheng C.Y."/>
            <person name="Krishnakumar V."/>
            <person name="Chan A.P."/>
            <person name="Thibaud-Nissen F."/>
            <person name="Schobel S."/>
            <person name="Town C.D."/>
        </authorList>
    </citation>
    <scope>GENOME REANNOTATION</scope>
    <source>
        <strain>cv. Columbia</strain>
    </source>
</reference>
<reference key="3">
    <citation type="journal article" date="2003" name="Science">
        <title>Empirical analysis of transcriptional activity in the Arabidopsis genome.</title>
        <authorList>
            <person name="Yamada K."/>
            <person name="Lim J."/>
            <person name="Dale J.M."/>
            <person name="Chen H."/>
            <person name="Shinn P."/>
            <person name="Palm C.J."/>
            <person name="Southwick A.M."/>
            <person name="Wu H.C."/>
            <person name="Kim C.J."/>
            <person name="Nguyen M."/>
            <person name="Pham P.K."/>
            <person name="Cheuk R.F."/>
            <person name="Karlin-Newmann G."/>
            <person name="Liu S.X."/>
            <person name="Lam B."/>
            <person name="Sakano H."/>
            <person name="Wu T."/>
            <person name="Yu G."/>
            <person name="Miranda M."/>
            <person name="Quach H.L."/>
            <person name="Tripp M."/>
            <person name="Chang C.H."/>
            <person name="Lee J.M."/>
            <person name="Toriumi M.J."/>
            <person name="Chan M.M."/>
            <person name="Tang C.C."/>
            <person name="Onodera C.S."/>
            <person name="Deng J.M."/>
            <person name="Akiyama K."/>
            <person name="Ansari Y."/>
            <person name="Arakawa T."/>
            <person name="Banh J."/>
            <person name="Banno F."/>
            <person name="Bowser L."/>
            <person name="Brooks S.Y."/>
            <person name="Carninci P."/>
            <person name="Chao Q."/>
            <person name="Choy N."/>
            <person name="Enju A."/>
            <person name="Goldsmith A.D."/>
            <person name="Gurjal M."/>
            <person name="Hansen N.F."/>
            <person name="Hayashizaki Y."/>
            <person name="Johnson-Hopson C."/>
            <person name="Hsuan V.W."/>
            <person name="Iida K."/>
            <person name="Karnes M."/>
            <person name="Khan S."/>
            <person name="Koesema E."/>
            <person name="Ishida J."/>
            <person name="Jiang P.X."/>
            <person name="Jones T."/>
            <person name="Kawai J."/>
            <person name="Kamiya A."/>
            <person name="Meyers C."/>
            <person name="Nakajima M."/>
            <person name="Narusaka M."/>
            <person name="Seki M."/>
            <person name="Sakurai T."/>
            <person name="Satou M."/>
            <person name="Tamse R."/>
            <person name="Vaysberg M."/>
            <person name="Wallender E.K."/>
            <person name="Wong C."/>
            <person name="Yamamura Y."/>
            <person name="Yuan S."/>
            <person name="Shinozaki K."/>
            <person name="Davis R.W."/>
            <person name="Theologis A."/>
            <person name="Ecker J.R."/>
        </authorList>
    </citation>
    <scope>NUCLEOTIDE SEQUENCE [LARGE SCALE MRNA]</scope>
    <source>
        <strain>cv. Columbia</strain>
    </source>
</reference>
<reference key="4">
    <citation type="submission" date="2006-07" db="EMBL/GenBank/DDBJ databases">
        <title>Large-scale analysis of RIKEN Arabidopsis full-length (RAFL) cDNAs.</title>
        <authorList>
            <person name="Totoki Y."/>
            <person name="Seki M."/>
            <person name="Ishida J."/>
            <person name="Nakajima M."/>
            <person name="Enju A."/>
            <person name="Kamiya A."/>
            <person name="Narusaka M."/>
            <person name="Shin-i T."/>
            <person name="Nakagawa M."/>
            <person name="Sakamoto N."/>
            <person name="Oishi K."/>
            <person name="Kohara Y."/>
            <person name="Kobayashi M."/>
            <person name="Toyoda A."/>
            <person name="Sakaki Y."/>
            <person name="Sakurai T."/>
            <person name="Iida K."/>
            <person name="Akiyama K."/>
            <person name="Satou M."/>
            <person name="Toyoda T."/>
            <person name="Konagaya A."/>
            <person name="Carninci P."/>
            <person name="Kawai J."/>
            <person name="Hayashizaki Y."/>
            <person name="Shinozaki K."/>
        </authorList>
    </citation>
    <scope>NUCLEOTIDE SEQUENCE [LARGE SCALE MRNA]</scope>
    <source>
        <strain>cv. Columbia</strain>
    </source>
</reference>
<reference key="5">
    <citation type="submission" date="2002-03" db="EMBL/GenBank/DDBJ databases">
        <title>Full-length cDNA from Arabidopsis thaliana.</title>
        <authorList>
            <person name="Brover V.V."/>
            <person name="Troukhan M.E."/>
            <person name="Alexandrov N.A."/>
            <person name="Lu Y.-P."/>
            <person name="Flavell R.B."/>
            <person name="Feldmann K.A."/>
        </authorList>
    </citation>
    <scope>NUCLEOTIDE SEQUENCE [LARGE SCALE MRNA]</scope>
</reference>
<reference key="6">
    <citation type="journal article" date="2004" name="Plant Mol. Biol.">
        <title>Identification of a novel plant MAR DNA binding protein localized on chromosomal surfaces.</title>
        <authorList>
            <person name="Fujimoto S."/>
            <person name="Matsunaga S."/>
            <person name="Yonemura M."/>
            <person name="Uchiyama S."/>
            <person name="Azuma T."/>
            <person name="Fukui K."/>
        </authorList>
    </citation>
    <scope>IDENTIFICATION</scope>
    <scope>GENE FAMILY</scope>
    <scope>NOMENCLATURE</scope>
    <source>
        <strain>cv. Columbia</strain>
    </source>
</reference>
<reference key="7">
    <citation type="journal article" date="2010" name="J. Integr. Plant Biol.">
        <title>Overexpression of AHL20 negatively regulates defenses in Arabidopsis.</title>
        <authorList>
            <person name="Lu H."/>
            <person name="Zou Y."/>
            <person name="Feng N."/>
        </authorList>
    </citation>
    <scope>FUNCTION</scope>
</reference>
<reference key="8">
    <citation type="journal article" date="2011" name="Mol. Plant Microbe Interact.">
        <title>The Arabidopsis thaliana DNA-binding protein AHL19 mediates verticillium wilt resistance.</title>
        <authorList>
            <person name="Yadeta K.A."/>
            <person name="Hanemian M."/>
            <person name="Smit P."/>
            <person name="Hiemstra J.A."/>
            <person name="Pereira A."/>
            <person name="Marco Y."/>
            <person name="Thomma B.P."/>
        </authorList>
    </citation>
    <scope>FUNCTION</scope>
    <scope>DISRUPTION PHENOTYPE</scope>
    <scope>TISSUE SPECIFICITY</scope>
    <scope>INDUCTION BY VERTICILLIUM</scope>
</reference>
<reference key="9">
    <citation type="journal article" date="2013" name="Proc. Natl. Acad. Sci. U.S.A.">
        <title>Arabidopsis thaliana AHL family modulates hypocotyl growth redundantly by interacting with each other via the PPC/DUF296 domain.</title>
        <authorList>
            <person name="Zhao J."/>
            <person name="Favero D.S."/>
            <person name="Peng H."/>
            <person name="Neff M.M."/>
        </authorList>
    </citation>
    <scope>GENE FAMILY</scope>
    <scope>DOMAIN PPC</scope>
</reference>
<accession>Q9SR17</accession>
<dbReference type="EMBL" id="AC011437">
    <property type="protein sequence ID" value="AAF04888.1"/>
    <property type="molecule type" value="Genomic_DNA"/>
</dbReference>
<dbReference type="EMBL" id="CP002686">
    <property type="protein sequence ID" value="AEE74098.1"/>
    <property type="molecule type" value="Genomic_DNA"/>
</dbReference>
<dbReference type="EMBL" id="BT005882">
    <property type="protein sequence ID" value="AAO64817.1"/>
    <property type="molecule type" value="mRNA"/>
</dbReference>
<dbReference type="EMBL" id="AK228206">
    <property type="protein sequence ID" value="BAF00160.1"/>
    <property type="molecule type" value="mRNA"/>
</dbReference>
<dbReference type="EMBL" id="AY085572">
    <property type="protein sequence ID" value="AAM62794.1"/>
    <property type="molecule type" value="mRNA"/>
</dbReference>
<dbReference type="EMBL" id="BR000355">
    <property type="protein sequence ID" value="FAA00290.1"/>
    <property type="molecule type" value="mRNA"/>
</dbReference>
<dbReference type="RefSeq" id="NP_566232.1">
    <property type="nucleotide sequence ID" value="NM_111328.3"/>
</dbReference>
<dbReference type="SMR" id="Q9SR17"/>
<dbReference type="FunCoup" id="Q9SR17">
    <property type="interactions" value="5"/>
</dbReference>
<dbReference type="STRING" id="3702.Q9SR17"/>
<dbReference type="MetOSite" id="Q9SR17"/>
<dbReference type="PaxDb" id="3702-AT3G04570.1"/>
<dbReference type="ProteomicsDB" id="244791"/>
<dbReference type="EnsemblPlants" id="AT3G04570.1">
    <property type="protein sequence ID" value="AT3G04570.1"/>
    <property type="gene ID" value="AT3G04570"/>
</dbReference>
<dbReference type="GeneID" id="819613"/>
<dbReference type="Gramene" id="AT3G04570.1">
    <property type="protein sequence ID" value="AT3G04570.1"/>
    <property type="gene ID" value="AT3G04570"/>
</dbReference>
<dbReference type="KEGG" id="ath:AT3G04570"/>
<dbReference type="Araport" id="AT3G04570"/>
<dbReference type="TAIR" id="AT3G04570">
    <property type="gene designation" value="AHL19"/>
</dbReference>
<dbReference type="eggNOG" id="ENOG502QRFG">
    <property type="taxonomic scope" value="Eukaryota"/>
</dbReference>
<dbReference type="HOGENOM" id="CLU_039808_2_0_1"/>
<dbReference type="InParanoid" id="Q9SR17"/>
<dbReference type="OMA" id="AYSSWAH"/>
<dbReference type="OrthoDB" id="1712967at2759"/>
<dbReference type="PhylomeDB" id="Q9SR17"/>
<dbReference type="PRO" id="PR:Q9SR17"/>
<dbReference type="Proteomes" id="UP000006548">
    <property type="component" value="Chromosome 3"/>
</dbReference>
<dbReference type="ExpressionAtlas" id="Q9SR17">
    <property type="expression patterns" value="baseline and differential"/>
</dbReference>
<dbReference type="GO" id="GO:0005634">
    <property type="term" value="C:nucleus"/>
    <property type="evidence" value="ECO:0007669"/>
    <property type="project" value="UniProtKB-SubCell"/>
</dbReference>
<dbReference type="GO" id="GO:0003680">
    <property type="term" value="F:minor groove of adenine-thymine-rich DNA binding"/>
    <property type="evidence" value="ECO:0007669"/>
    <property type="project" value="InterPro"/>
</dbReference>
<dbReference type="GO" id="GO:0050832">
    <property type="term" value="P:defense response to fungus"/>
    <property type="evidence" value="ECO:0000315"/>
    <property type="project" value="TAIR"/>
</dbReference>
<dbReference type="GO" id="GO:0045087">
    <property type="term" value="P:innate immune response"/>
    <property type="evidence" value="ECO:0007669"/>
    <property type="project" value="UniProtKB-KW"/>
</dbReference>
<dbReference type="GO" id="GO:0045824">
    <property type="term" value="P:negative regulation of innate immune response"/>
    <property type="evidence" value="ECO:0000315"/>
    <property type="project" value="UniProtKB"/>
</dbReference>
<dbReference type="CDD" id="cd11378">
    <property type="entry name" value="DUF296"/>
    <property type="match status" value="1"/>
</dbReference>
<dbReference type="FunFam" id="3.30.1330.80:FF:000001">
    <property type="entry name" value="AT-hook motif nuclear-localized protein"/>
    <property type="match status" value="1"/>
</dbReference>
<dbReference type="Gene3D" id="3.30.1330.80">
    <property type="entry name" value="Hypothetical protein, similar to alpha- acetolactate decarboxylase, domain 2"/>
    <property type="match status" value="1"/>
</dbReference>
<dbReference type="InterPro" id="IPR014476">
    <property type="entry name" value="AHL15-29"/>
</dbReference>
<dbReference type="InterPro" id="IPR005175">
    <property type="entry name" value="PPC_dom"/>
</dbReference>
<dbReference type="PANTHER" id="PTHR31100">
    <property type="entry name" value="AT-HOOK MOTIF NUCLEAR-LOCALIZED PROTEIN 15"/>
    <property type="match status" value="1"/>
</dbReference>
<dbReference type="PANTHER" id="PTHR31100:SF8">
    <property type="entry name" value="AT-HOOK MOTIF NUCLEAR-LOCALIZED PROTEIN 19"/>
    <property type="match status" value="1"/>
</dbReference>
<dbReference type="Pfam" id="PF03479">
    <property type="entry name" value="PCC"/>
    <property type="match status" value="1"/>
</dbReference>
<dbReference type="PIRSF" id="PIRSF016021">
    <property type="entry name" value="ESCAROLA"/>
    <property type="match status" value="1"/>
</dbReference>
<dbReference type="SUPFAM" id="SSF117856">
    <property type="entry name" value="AF0104/ALDC/Ptd012-like"/>
    <property type="match status" value="1"/>
</dbReference>
<dbReference type="PROSITE" id="PS51742">
    <property type="entry name" value="PPC"/>
    <property type="match status" value="1"/>
</dbReference>
<evidence type="ECO:0000250" key="1">
    <source>
        <dbReference type="UniProtKB" id="Q8VYJ2"/>
    </source>
</evidence>
<evidence type="ECO:0000255" key="2">
    <source>
        <dbReference type="PROSITE-ProRule" id="PRU01078"/>
    </source>
</evidence>
<evidence type="ECO:0000256" key="3">
    <source>
        <dbReference type="SAM" id="MobiDB-lite"/>
    </source>
</evidence>
<evidence type="ECO:0000269" key="4">
    <source>
    </source>
</evidence>
<evidence type="ECO:0000269" key="5">
    <source>
    </source>
</evidence>
<evidence type="ECO:0000269" key="6">
    <source>
    </source>
</evidence>
<evidence type="ECO:0000303" key="7">
    <source>
    </source>
</evidence>
<evidence type="ECO:0000305" key="8"/>
<evidence type="ECO:0000312" key="9">
    <source>
        <dbReference type="Araport" id="AT3G04570"/>
    </source>
</evidence>
<evidence type="ECO:0000312" key="10">
    <source>
        <dbReference type="EMBL" id="AAF04888.1"/>
    </source>
</evidence>
<evidence type="ECO:0000312" key="11">
    <source>
        <dbReference type="EMBL" id="FAA00290.1"/>
    </source>
</evidence>
<protein>
    <recommendedName>
        <fullName evidence="11">AT-hook motif nuclear-localized protein 19</fullName>
    </recommendedName>
</protein>
<name>AHL19_ARATH</name>
<gene>
    <name evidence="7" type="primary">AHL19</name>
    <name evidence="9" type="ordered locus">At3g04570</name>
    <name evidence="10" type="ORF">F7O18.4</name>
</gene>
<proteinExistence type="evidence at transcript level"/>
<sequence length="315" mass="32038">MANPWWTGQVNLSGLETTPPGSSQLKKPDLHISMNMAMDSGHNNHHHHQEVDNNNNDDDRDNLSGDDHEPREGAVEAPTRRPRGRPAGSKNKPKPPIFVTRDSPNALKSHVMEIASGTDVIETLATFARRRQRGICILSGNGTVANVTLRQPSTAAVAAAPGGAAVLALQGRFEILSLTGSFLPGPAPPGSTGLTIYLAGGQGQVVGGSVVGPLMAAGPVMLIAATFSNATYERLPLEEEEAAERGGGGGSGGVVPGQLGGGGSPLSSGAGGGDGNQGLPVYNMPGNLVSNGGSGGGGQMSGQEAYGWAQARSGF</sequence>
<comment type="function">
    <text evidence="1 4 5">Transcription factor that specifically binds AT-rich DNA sequences related to the nuclear matrix attachment regions (MARs) (By similarity). Negatively regulates plant innate immunity (PTI) to pathogens through the down-regulation of the PAMP-triggered FRK1 expression (PubMed:20738724). Positively regulates defense against fungal Verticillium infection (PubMed:21864046).</text>
</comment>
<comment type="subcellular location">
    <subcellularLocation>
        <location evidence="1">Nucleus</location>
    </subcellularLocation>
</comment>
<comment type="tissue specificity">
    <text evidence="5">Slightly expressed in roots.</text>
</comment>
<comment type="induction">
    <text evidence="5">By Verticillium dahlia attack.</text>
</comment>
<comment type="domain">
    <text evidence="6">The PPC domain mediates interactions between AHL proteins.</text>
</comment>
<comment type="disruption phenotype">
    <text evidence="5">Enhanced susceptibility to Verticillium wilt resulting in wilting, stunting and chlorosis.</text>
</comment>
<comment type="miscellaneous">
    <text evidence="4 5">Overexpression of AHL19 results in a decreased flg22-induced expression of FRK1 (PubMed:20738724). Overexpression of AHL19 results in an increased resistance to Verticillium wilt (PubMed:21864046).</text>
</comment>
<feature type="chain" id="PRO_0000432037" description="AT-hook motif nuclear-localized protein 19">
    <location>
        <begin position="1"/>
        <end position="315"/>
    </location>
</feature>
<feature type="domain" description="PPC" evidence="2">
    <location>
        <begin position="104"/>
        <end position="248"/>
    </location>
</feature>
<feature type="DNA-binding region" description="A.T hook" evidence="8">
    <location>
        <begin position="80"/>
        <end position="92"/>
    </location>
</feature>
<feature type="region of interest" description="Disordered" evidence="3">
    <location>
        <begin position="1"/>
        <end position="104"/>
    </location>
</feature>
<feature type="region of interest" description="Disordered" evidence="3">
    <location>
        <begin position="239"/>
        <end position="285"/>
    </location>
</feature>
<feature type="compositionally biased region" description="Polar residues" evidence="3">
    <location>
        <begin position="1"/>
        <end position="25"/>
    </location>
</feature>
<feature type="compositionally biased region" description="Basic and acidic residues" evidence="3">
    <location>
        <begin position="61"/>
        <end position="74"/>
    </location>
</feature>
<feature type="compositionally biased region" description="Gly residues" evidence="3">
    <location>
        <begin position="245"/>
        <end position="276"/>
    </location>
</feature>
<organism>
    <name type="scientific">Arabidopsis thaliana</name>
    <name type="common">Mouse-ear cress</name>
    <dbReference type="NCBI Taxonomy" id="3702"/>
    <lineage>
        <taxon>Eukaryota</taxon>
        <taxon>Viridiplantae</taxon>
        <taxon>Streptophyta</taxon>
        <taxon>Embryophyta</taxon>
        <taxon>Tracheophyta</taxon>
        <taxon>Spermatophyta</taxon>
        <taxon>Magnoliopsida</taxon>
        <taxon>eudicotyledons</taxon>
        <taxon>Gunneridae</taxon>
        <taxon>Pentapetalae</taxon>
        <taxon>rosids</taxon>
        <taxon>malvids</taxon>
        <taxon>Brassicales</taxon>
        <taxon>Brassicaceae</taxon>
        <taxon>Camelineae</taxon>
        <taxon>Arabidopsis</taxon>
    </lineage>
</organism>